<reference key="1">
    <citation type="journal article" date="2001" name="Nature">
        <title>Genome sequence of Yersinia pestis, the causative agent of plague.</title>
        <authorList>
            <person name="Parkhill J."/>
            <person name="Wren B.W."/>
            <person name="Thomson N.R."/>
            <person name="Titball R.W."/>
            <person name="Holden M.T.G."/>
            <person name="Prentice M.B."/>
            <person name="Sebaihia M."/>
            <person name="James K.D."/>
            <person name="Churcher C.M."/>
            <person name="Mungall K.L."/>
            <person name="Baker S."/>
            <person name="Basham D."/>
            <person name="Bentley S.D."/>
            <person name="Brooks K."/>
            <person name="Cerdeno-Tarraga A.-M."/>
            <person name="Chillingworth T."/>
            <person name="Cronin A."/>
            <person name="Davies R.M."/>
            <person name="Davis P."/>
            <person name="Dougan G."/>
            <person name="Feltwell T."/>
            <person name="Hamlin N."/>
            <person name="Holroyd S."/>
            <person name="Jagels K."/>
            <person name="Karlyshev A.V."/>
            <person name="Leather S."/>
            <person name="Moule S."/>
            <person name="Oyston P.C.F."/>
            <person name="Quail M.A."/>
            <person name="Rutherford K.M."/>
            <person name="Simmonds M."/>
            <person name="Skelton J."/>
            <person name="Stevens K."/>
            <person name="Whitehead S."/>
            <person name="Barrell B.G."/>
        </authorList>
    </citation>
    <scope>NUCLEOTIDE SEQUENCE [LARGE SCALE GENOMIC DNA]</scope>
    <source>
        <strain>CO-92 / Biovar Orientalis</strain>
    </source>
</reference>
<reference key="2">
    <citation type="journal article" date="2002" name="J. Bacteriol.">
        <title>Genome sequence of Yersinia pestis KIM.</title>
        <authorList>
            <person name="Deng W."/>
            <person name="Burland V."/>
            <person name="Plunkett G. III"/>
            <person name="Boutin A."/>
            <person name="Mayhew G.F."/>
            <person name="Liss P."/>
            <person name="Perna N.T."/>
            <person name="Rose D.J."/>
            <person name="Mau B."/>
            <person name="Zhou S."/>
            <person name="Schwartz D.C."/>
            <person name="Fetherston J.D."/>
            <person name="Lindler L.E."/>
            <person name="Brubaker R.R."/>
            <person name="Plano G.V."/>
            <person name="Straley S.C."/>
            <person name="McDonough K.A."/>
            <person name="Nilles M.L."/>
            <person name="Matson J.S."/>
            <person name="Blattner F.R."/>
            <person name="Perry R.D."/>
        </authorList>
    </citation>
    <scope>NUCLEOTIDE SEQUENCE [LARGE SCALE GENOMIC DNA]</scope>
    <source>
        <strain>KIM10+ / Biovar Mediaevalis</strain>
    </source>
</reference>
<reference key="3">
    <citation type="journal article" date="2004" name="DNA Res.">
        <title>Complete genome sequence of Yersinia pestis strain 91001, an isolate avirulent to humans.</title>
        <authorList>
            <person name="Song Y."/>
            <person name="Tong Z."/>
            <person name="Wang J."/>
            <person name="Wang L."/>
            <person name="Guo Z."/>
            <person name="Han Y."/>
            <person name="Zhang J."/>
            <person name="Pei D."/>
            <person name="Zhou D."/>
            <person name="Qin H."/>
            <person name="Pang X."/>
            <person name="Han Y."/>
            <person name="Zhai J."/>
            <person name="Li M."/>
            <person name="Cui B."/>
            <person name="Qi Z."/>
            <person name="Jin L."/>
            <person name="Dai R."/>
            <person name="Chen F."/>
            <person name="Li S."/>
            <person name="Ye C."/>
            <person name="Du Z."/>
            <person name="Lin W."/>
            <person name="Wang J."/>
            <person name="Yu J."/>
            <person name="Yang H."/>
            <person name="Wang J."/>
            <person name="Huang P."/>
            <person name="Yang R."/>
        </authorList>
    </citation>
    <scope>NUCLEOTIDE SEQUENCE [LARGE SCALE GENOMIC DNA]</scope>
    <source>
        <strain>91001 / Biovar Mediaevalis</strain>
    </source>
</reference>
<proteinExistence type="inferred from homology"/>
<protein>
    <recommendedName>
        <fullName evidence="1">Undecaprenyl-diphosphatase</fullName>
        <ecNumber evidence="1">3.6.1.27</ecNumber>
    </recommendedName>
    <alternativeName>
        <fullName evidence="1">Bacitracin resistance protein</fullName>
    </alternativeName>
    <alternativeName>
        <fullName evidence="1">Undecaprenyl pyrophosphate phosphatase</fullName>
    </alternativeName>
</protein>
<sequence>MTDMYSLFVAFILGVVEGLTEFLPVSSTGHMIIVGELLGFTGDKAKTFEVIIQLGSILAVVVVFWRRLFGLIGIHFGAVPHEGKTNGHLTLGHILLAMIPAVILGLAFHDVIKALFDPKSVMYALVAGGVLLLAAEWLKPKNPKAVGLDDITYRQAFAIGCFQCLALWPGFSRSGATISGGMLVGVNRYAASEFSFILAVPMMIGASGLDLYKSLHFLTLGDLPMFAVGFITAFIVALIAIKTFLSLIKRISFVPFAIYRFIVAAVVYWVFM</sequence>
<name>UPPP_YERPE</name>
<keyword id="KW-0046">Antibiotic resistance</keyword>
<keyword id="KW-0997">Cell inner membrane</keyword>
<keyword id="KW-1003">Cell membrane</keyword>
<keyword id="KW-0133">Cell shape</keyword>
<keyword id="KW-0961">Cell wall biogenesis/degradation</keyword>
<keyword id="KW-0378">Hydrolase</keyword>
<keyword id="KW-0472">Membrane</keyword>
<keyword id="KW-0573">Peptidoglycan synthesis</keyword>
<keyword id="KW-1185">Reference proteome</keyword>
<keyword id="KW-0812">Transmembrane</keyword>
<keyword id="KW-1133">Transmembrane helix</keyword>
<organism>
    <name type="scientific">Yersinia pestis</name>
    <dbReference type="NCBI Taxonomy" id="632"/>
    <lineage>
        <taxon>Bacteria</taxon>
        <taxon>Pseudomonadati</taxon>
        <taxon>Pseudomonadota</taxon>
        <taxon>Gammaproteobacteria</taxon>
        <taxon>Enterobacterales</taxon>
        <taxon>Yersiniaceae</taxon>
        <taxon>Yersinia</taxon>
    </lineage>
</organism>
<gene>
    <name evidence="1" type="primary">uppP</name>
    <name type="synonym">bacA</name>
    <name type="synonym">upk</name>
    <name type="ordered locus">YPO0649</name>
    <name type="ordered locus">y3530</name>
    <name type="ordered locus">YP_2964</name>
</gene>
<feature type="chain" id="PRO_0000151246" description="Undecaprenyl-diphosphatase">
    <location>
        <begin position="1"/>
        <end position="272"/>
    </location>
</feature>
<feature type="transmembrane region" description="Helical" evidence="1">
    <location>
        <begin position="5"/>
        <end position="25"/>
    </location>
</feature>
<feature type="transmembrane region" description="Helical" evidence="1">
    <location>
        <begin position="45"/>
        <end position="65"/>
    </location>
</feature>
<feature type="transmembrane region" description="Helical" evidence="1">
    <location>
        <begin position="88"/>
        <end position="108"/>
    </location>
</feature>
<feature type="transmembrane region" description="Helical" evidence="1">
    <location>
        <begin position="114"/>
        <end position="134"/>
    </location>
</feature>
<feature type="transmembrane region" description="Helical" evidence="1">
    <location>
        <begin position="153"/>
        <end position="172"/>
    </location>
</feature>
<feature type="transmembrane region" description="Helical" evidence="1">
    <location>
        <begin position="189"/>
        <end position="209"/>
    </location>
</feature>
<feature type="transmembrane region" description="Helical" evidence="1">
    <location>
        <begin position="221"/>
        <end position="241"/>
    </location>
</feature>
<feature type="transmembrane region" description="Helical" evidence="1">
    <location>
        <begin position="251"/>
        <end position="271"/>
    </location>
</feature>
<comment type="function">
    <text evidence="1">Catalyzes the dephosphorylation of undecaprenyl diphosphate (UPP). Confers resistance to bacitracin.</text>
</comment>
<comment type="catalytic activity">
    <reaction evidence="1">
        <text>di-trans,octa-cis-undecaprenyl diphosphate + H2O = di-trans,octa-cis-undecaprenyl phosphate + phosphate + H(+)</text>
        <dbReference type="Rhea" id="RHEA:28094"/>
        <dbReference type="ChEBI" id="CHEBI:15377"/>
        <dbReference type="ChEBI" id="CHEBI:15378"/>
        <dbReference type="ChEBI" id="CHEBI:43474"/>
        <dbReference type="ChEBI" id="CHEBI:58405"/>
        <dbReference type="ChEBI" id="CHEBI:60392"/>
        <dbReference type="EC" id="3.6.1.27"/>
    </reaction>
</comment>
<comment type="subcellular location">
    <subcellularLocation>
        <location evidence="1">Cell inner membrane</location>
        <topology evidence="1">Multi-pass membrane protein</topology>
    </subcellularLocation>
</comment>
<comment type="miscellaneous">
    <text>Bacitracin is thought to be involved in the inhibition of peptidoglycan synthesis by sequestering undecaprenyl diphosphate, thereby reducing the pool of lipid carrier available.</text>
</comment>
<comment type="similarity">
    <text evidence="1">Belongs to the UppP family.</text>
</comment>
<accession>Q8ZI65</accession>
<accession>Q0WJ21</accession>
<evidence type="ECO:0000255" key="1">
    <source>
        <dbReference type="HAMAP-Rule" id="MF_01006"/>
    </source>
</evidence>
<dbReference type="EC" id="3.6.1.27" evidence="1"/>
<dbReference type="EMBL" id="AL590842">
    <property type="protein sequence ID" value="CAL19326.1"/>
    <property type="molecule type" value="Genomic_DNA"/>
</dbReference>
<dbReference type="EMBL" id="AE009952">
    <property type="protein sequence ID" value="AAM87078.1"/>
    <property type="molecule type" value="Genomic_DNA"/>
</dbReference>
<dbReference type="EMBL" id="AE017042">
    <property type="protein sequence ID" value="AAS63143.1"/>
    <property type="molecule type" value="Genomic_DNA"/>
</dbReference>
<dbReference type="PIR" id="AD0080">
    <property type="entry name" value="AD0080"/>
</dbReference>
<dbReference type="RefSeq" id="WP_002212198.1">
    <property type="nucleotide sequence ID" value="NZ_WUCM01000022.1"/>
</dbReference>
<dbReference type="RefSeq" id="YP_002345717.1">
    <property type="nucleotide sequence ID" value="NC_003143.1"/>
</dbReference>
<dbReference type="SMR" id="Q8ZI65"/>
<dbReference type="IntAct" id="Q8ZI65">
    <property type="interactions" value="1"/>
</dbReference>
<dbReference type="STRING" id="214092.YPO0649"/>
<dbReference type="PaxDb" id="214092-YPO0649"/>
<dbReference type="DNASU" id="1148477"/>
<dbReference type="EnsemblBacteria" id="AAS63143">
    <property type="protein sequence ID" value="AAS63143"/>
    <property type="gene ID" value="YP_2964"/>
</dbReference>
<dbReference type="GeneID" id="57973975"/>
<dbReference type="KEGG" id="ype:YPO0649"/>
<dbReference type="KEGG" id="ypk:y3530"/>
<dbReference type="KEGG" id="ypm:YP_2964"/>
<dbReference type="PATRIC" id="fig|214092.21.peg.907"/>
<dbReference type="eggNOG" id="COG1968">
    <property type="taxonomic scope" value="Bacteria"/>
</dbReference>
<dbReference type="HOGENOM" id="CLU_060296_2_0_6"/>
<dbReference type="OMA" id="AWYRIVF"/>
<dbReference type="OrthoDB" id="9808289at2"/>
<dbReference type="Proteomes" id="UP000000815">
    <property type="component" value="Chromosome"/>
</dbReference>
<dbReference type="Proteomes" id="UP000001019">
    <property type="component" value="Chromosome"/>
</dbReference>
<dbReference type="Proteomes" id="UP000002490">
    <property type="component" value="Chromosome"/>
</dbReference>
<dbReference type="GO" id="GO:0005886">
    <property type="term" value="C:plasma membrane"/>
    <property type="evidence" value="ECO:0000318"/>
    <property type="project" value="GO_Central"/>
</dbReference>
<dbReference type="GO" id="GO:0050380">
    <property type="term" value="F:undecaprenyl-diphosphatase activity"/>
    <property type="evidence" value="ECO:0000318"/>
    <property type="project" value="GO_Central"/>
</dbReference>
<dbReference type="GO" id="GO:0071555">
    <property type="term" value="P:cell wall organization"/>
    <property type="evidence" value="ECO:0007669"/>
    <property type="project" value="UniProtKB-KW"/>
</dbReference>
<dbReference type="GO" id="GO:0009252">
    <property type="term" value="P:peptidoglycan biosynthetic process"/>
    <property type="evidence" value="ECO:0007669"/>
    <property type="project" value="UniProtKB-KW"/>
</dbReference>
<dbReference type="GO" id="GO:0000270">
    <property type="term" value="P:peptidoglycan metabolic process"/>
    <property type="evidence" value="ECO:0000318"/>
    <property type="project" value="GO_Central"/>
</dbReference>
<dbReference type="GO" id="GO:0008360">
    <property type="term" value="P:regulation of cell shape"/>
    <property type="evidence" value="ECO:0007669"/>
    <property type="project" value="UniProtKB-KW"/>
</dbReference>
<dbReference type="GO" id="GO:0046677">
    <property type="term" value="P:response to antibiotic"/>
    <property type="evidence" value="ECO:0007669"/>
    <property type="project" value="UniProtKB-UniRule"/>
</dbReference>
<dbReference type="HAMAP" id="MF_01006">
    <property type="entry name" value="Undec_diphosphatase"/>
    <property type="match status" value="1"/>
</dbReference>
<dbReference type="InterPro" id="IPR003824">
    <property type="entry name" value="UppP"/>
</dbReference>
<dbReference type="NCBIfam" id="NF001388">
    <property type="entry name" value="PRK00281.1-1"/>
    <property type="match status" value="1"/>
</dbReference>
<dbReference type="NCBIfam" id="NF001389">
    <property type="entry name" value="PRK00281.1-2"/>
    <property type="match status" value="1"/>
</dbReference>
<dbReference type="NCBIfam" id="NF001390">
    <property type="entry name" value="PRK00281.1-4"/>
    <property type="match status" value="1"/>
</dbReference>
<dbReference type="NCBIfam" id="TIGR00753">
    <property type="entry name" value="undec_PP_bacA"/>
    <property type="match status" value="1"/>
</dbReference>
<dbReference type="PANTHER" id="PTHR30622">
    <property type="entry name" value="UNDECAPRENYL-DIPHOSPHATASE"/>
    <property type="match status" value="1"/>
</dbReference>
<dbReference type="PANTHER" id="PTHR30622:SF3">
    <property type="entry name" value="UNDECAPRENYL-DIPHOSPHATASE"/>
    <property type="match status" value="1"/>
</dbReference>
<dbReference type="Pfam" id="PF02673">
    <property type="entry name" value="BacA"/>
    <property type="match status" value="1"/>
</dbReference>